<proteinExistence type="inferred from homology"/>
<comment type="function">
    <text evidence="1">Cell division protein that is part of the divisome complex and is recruited early to the Z-ring. Probably stimulates Z-ring formation, perhaps through the cross-linking of FtsZ protofilaments. Its function overlaps with FtsA.</text>
</comment>
<comment type="subunit">
    <text evidence="1">Homodimer. Interacts with FtsZ.</text>
</comment>
<comment type="subcellular location">
    <subcellularLocation>
        <location evidence="1">Cytoplasm</location>
    </subcellularLocation>
    <text evidence="1">Localizes to the division site, in a FtsZ-dependent manner.</text>
</comment>
<comment type="similarity">
    <text evidence="1">Belongs to the SepF family.</text>
</comment>
<feature type="chain" id="PRO_1000164542" description="Cell division protein SepF">
    <location>
        <begin position="1"/>
        <end position="220"/>
    </location>
</feature>
<feature type="region of interest" description="Disordered" evidence="2">
    <location>
        <begin position="1"/>
        <end position="120"/>
    </location>
</feature>
<feature type="compositionally biased region" description="Basic and acidic residues" evidence="2">
    <location>
        <begin position="26"/>
        <end position="35"/>
    </location>
</feature>
<feature type="compositionally biased region" description="Low complexity" evidence="2">
    <location>
        <begin position="39"/>
        <end position="79"/>
    </location>
</feature>
<feature type="compositionally biased region" description="Basic and acidic residues" evidence="2">
    <location>
        <begin position="93"/>
        <end position="102"/>
    </location>
</feature>
<dbReference type="EMBL" id="FM204883">
    <property type="protein sequence ID" value="CAW92928.1"/>
    <property type="molecule type" value="Genomic_DNA"/>
</dbReference>
<dbReference type="RefSeq" id="WP_012678303.1">
    <property type="nucleotide sequence ID" value="NC_012471.1"/>
</dbReference>
<dbReference type="SMR" id="C0M6J7"/>
<dbReference type="KEGG" id="seu:SEQ_0623"/>
<dbReference type="HOGENOM" id="CLU_078499_2_0_9"/>
<dbReference type="OrthoDB" id="9815206at2"/>
<dbReference type="Proteomes" id="UP000001365">
    <property type="component" value="Chromosome"/>
</dbReference>
<dbReference type="GO" id="GO:0005737">
    <property type="term" value="C:cytoplasm"/>
    <property type="evidence" value="ECO:0007669"/>
    <property type="project" value="UniProtKB-SubCell"/>
</dbReference>
<dbReference type="GO" id="GO:0000917">
    <property type="term" value="P:division septum assembly"/>
    <property type="evidence" value="ECO:0007669"/>
    <property type="project" value="UniProtKB-KW"/>
</dbReference>
<dbReference type="GO" id="GO:0043093">
    <property type="term" value="P:FtsZ-dependent cytokinesis"/>
    <property type="evidence" value="ECO:0007669"/>
    <property type="project" value="UniProtKB-UniRule"/>
</dbReference>
<dbReference type="Gene3D" id="3.30.110.150">
    <property type="entry name" value="SepF-like protein"/>
    <property type="match status" value="1"/>
</dbReference>
<dbReference type="HAMAP" id="MF_01197">
    <property type="entry name" value="SepF"/>
    <property type="match status" value="1"/>
</dbReference>
<dbReference type="InterPro" id="IPR023052">
    <property type="entry name" value="Cell_div_SepF"/>
</dbReference>
<dbReference type="InterPro" id="IPR007561">
    <property type="entry name" value="Cell_div_SepF/SepF-rel"/>
</dbReference>
<dbReference type="InterPro" id="IPR038594">
    <property type="entry name" value="SepF-like_sf"/>
</dbReference>
<dbReference type="PANTHER" id="PTHR35798">
    <property type="entry name" value="CELL DIVISION PROTEIN SEPF"/>
    <property type="match status" value="1"/>
</dbReference>
<dbReference type="PANTHER" id="PTHR35798:SF1">
    <property type="entry name" value="CELL DIVISION PROTEIN SEPF"/>
    <property type="match status" value="1"/>
</dbReference>
<dbReference type="Pfam" id="PF04472">
    <property type="entry name" value="SepF"/>
    <property type="match status" value="1"/>
</dbReference>
<accession>C0M6J7</accession>
<reference key="1">
    <citation type="journal article" date="2009" name="PLoS Pathog.">
        <title>Genomic evidence for the evolution of Streptococcus equi: host restriction, increased virulence, and genetic exchange with human pathogens.</title>
        <authorList>
            <person name="Holden M.T.G."/>
            <person name="Heather Z."/>
            <person name="Paillot R."/>
            <person name="Steward K.F."/>
            <person name="Webb K."/>
            <person name="Ainslie F."/>
            <person name="Jourdan T."/>
            <person name="Bason N.C."/>
            <person name="Holroyd N.E."/>
            <person name="Mungall K."/>
            <person name="Quail M.A."/>
            <person name="Sanders M."/>
            <person name="Simmonds M."/>
            <person name="Willey D."/>
            <person name="Brooks K."/>
            <person name="Aanensen D.M."/>
            <person name="Spratt B.G."/>
            <person name="Jolley K.A."/>
            <person name="Maiden M.C.J."/>
            <person name="Kehoe M."/>
            <person name="Chanter N."/>
            <person name="Bentley S.D."/>
            <person name="Robinson C."/>
            <person name="Maskell D.J."/>
            <person name="Parkhill J."/>
            <person name="Waller A.S."/>
        </authorList>
    </citation>
    <scope>NUCLEOTIDE SEQUENCE [LARGE SCALE GENOMIC DNA]</scope>
    <source>
        <strain>4047</strain>
    </source>
</reference>
<sequence>MAIKDAFNKMISYFDTDGVSEVEEELSSKKQEEPVTKSQQTSRPNQQQQAARASQPQQPKQARPQMQAQQRPQSQSRAAYAERPYQGQSQARVSHDYNDRRATSAPSASSRREQYQHAAHQEQTTIALKYPRKYEDAQEIVDLLIVNECVLIDFQYMLDAQARRCLDFIDGASKVLYGTLQRVGSSMYLLTPSNVSVNIEEMNIPNNGQDIGFDFDMKRR</sequence>
<name>SEPF_STRE4</name>
<gene>
    <name evidence="1" type="primary">sepF</name>
    <name type="ordered locus">SEQ_0623</name>
</gene>
<evidence type="ECO:0000255" key="1">
    <source>
        <dbReference type="HAMAP-Rule" id="MF_01197"/>
    </source>
</evidence>
<evidence type="ECO:0000256" key="2">
    <source>
        <dbReference type="SAM" id="MobiDB-lite"/>
    </source>
</evidence>
<organism>
    <name type="scientific">Streptococcus equi subsp. equi (strain 4047)</name>
    <dbReference type="NCBI Taxonomy" id="553482"/>
    <lineage>
        <taxon>Bacteria</taxon>
        <taxon>Bacillati</taxon>
        <taxon>Bacillota</taxon>
        <taxon>Bacilli</taxon>
        <taxon>Lactobacillales</taxon>
        <taxon>Streptococcaceae</taxon>
        <taxon>Streptococcus</taxon>
    </lineage>
</organism>
<protein>
    <recommendedName>
        <fullName evidence="1">Cell division protein SepF</fullName>
    </recommendedName>
</protein>
<keyword id="KW-0131">Cell cycle</keyword>
<keyword id="KW-0132">Cell division</keyword>
<keyword id="KW-0963">Cytoplasm</keyword>
<keyword id="KW-0717">Septation</keyword>